<gene>
    <name evidence="1" type="primary">rpl31e</name>
    <name type="ordered locus">MMP0062</name>
</gene>
<organism>
    <name type="scientific">Methanococcus maripaludis (strain DSM 14266 / JCM 13030 / NBRC 101832 / S2 / LL)</name>
    <dbReference type="NCBI Taxonomy" id="267377"/>
    <lineage>
        <taxon>Archaea</taxon>
        <taxon>Methanobacteriati</taxon>
        <taxon>Methanobacteriota</taxon>
        <taxon>Methanomada group</taxon>
        <taxon>Methanococci</taxon>
        <taxon>Methanococcales</taxon>
        <taxon>Methanococcaceae</taxon>
        <taxon>Methanococcus</taxon>
    </lineage>
</organism>
<dbReference type="EMBL" id="BX950229">
    <property type="protein sequence ID" value="CAF29618.1"/>
    <property type="molecule type" value="Genomic_DNA"/>
</dbReference>
<dbReference type="RefSeq" id="WP_011170006.1">
    <property type="nucleotide sequence ID" value="NC_005791.1"/>
</dbReference>
<dbReference type="SMR" id="Q6M155"/>
<dbReference type="STRING" id="267377.MMP0062"/>
<dbReference type="EnsemblBacteria" id="CAF29618">
    <property type="protein sequence ID" value="CAF29618"/>
    <property type="gene ID" value="MMP0062"/>
</dbReference>
<dbReference type="KEGG" id="mmp:MMP0062"/>
<dbReference type="PATRIC" id="fig|267377.15.peg.63"/>
<dbReference type="eggNOG" id="arCOG04473">
    <property type="taxonomic scope" value="Archaea"/>
</dbReference>
<dbReference type="HOGENOM" id="CLU_112570_3_2_2"/>
<dbReference type="OrthoDB" id="10127at2157"/>
<dbReference type="Proteomes" id="UP000000590">
    <property type="component" value="Chromosome"/>
</dbReference>
<dbReference type="GO" id="GO:0022625">
    <property type="term" value="C:cytosolic large ribosomal subunit"/>
    <property type="evidence" value="ECO:0007669"/>
    <property type="project" value="TreeGrafter"/>
</dbReference>
<dbReference type="GO" id="GO:0003735">
    <property type="term" value="F:structural constituent of ribosome"/>
    <property type="evidence" value="ECO:0007669"/>
    <property type="project" value="InterPro"/>
</dbReference>
<dbReference type="GO" id="GO:0002181">
    <property type="term" value="P:cytoplasmic translation"/>
    <property type="evidence" value="ECO:0007669"/>
    <property type="project" value="TreeGrafter"/>
</dbReference>
<dbReference type="CDD" id="cd00463">
    <property type="entry name" value="Ribosomal_L31e"/>
    <property type="match status" value="1"/>
</dbReference>
<dbReference type="Gene3D" id="3.10.440.10">
    <property type="match status" value="1"/>
</dbReference>
<dbReference type="HAMAP" id="MF_00410">
    <property type="entry name" value="Ribosomal_eL31"/>
    <property type="match status" value="1"/>
</dbReference>
<dbReference type="InterPro" id="IPR000054">
    <property type="entry name" value="Ribosomal_eL31"/>
</dbReference>
<dbReference type="InterPro" id="IPR020052">
    <property type="entry name" value="Ribosomal_eL31_CS"/>
</dbReference>
<dbReference type="InterPro" id="IPR023621">
    <property type="entry name" value="Ribosomal_eL31_dom_sf"/>
</dbReference>
<dbReference type="NCBIfam" id="NF002258">
    <property type="entry name" value="PRK01192.1-1"/>
    <property type="match status" value="1"/>
</dbReference>
<dbReference type="PANTHER" id="PTHR10956">
    <property type="entry name" value="60S RIBOSOMAL PROTEIN L31"/>
    <property type="match status" value="1"/>
</dbReference>
<dbReference type="PANTHER" id="PTHR10956:SF0">
    <property type="entry name" value="60S RIBOSOMAL PROTEIN L31"/>
    <property type="match status" value="1"/>
</dbReference>
<dbReference type="Pfam" id="PF01198">
    <property type="entry name" value="Ribosomal_L31e"/>
    <property type="match status" value="1"/>
</dbReference>
<dbReference type="SMART" id="SM01380">
    <property type="entry name" value="Ribosomal_L31e"/>
    <property type="match status" value="1"/>
</dbReference>
<dbReference type="SUPFAM" id="SSF54575">
    <property type="entry name" value="Ribosomal protein L31e"/>
    <property type="match status" value="1"/>
</dbReference>
<dbReference type="PROSITE" id="PS01144">
    <property type="entry name" value="RIBOSOMAL_L31E"/>
    <property type="match status" value="1"/>
</dbReference>
<reference key="1">
    <citation type="journal article" date="2004" name="J. Bacteriol.">
        <title>Complete genome sequence of the genetically tractable hydrogenotrophic methanogen Methanococcus maripaludis.</title>
        <authorList>
            <person name="Hendrickson E.L."/>
            <person name="Kaul R."/>
            <person name="Zhou Y."/>
            <person name="Bovee D."/>
            <person name="Chapman P."/>
            <person name="Chung J."/>
            <person name="Conway de Macario E."/>
            <person name="Dodsworth J.A."/>
            <person name="Gillett W."/>
            <person name="Graham D.E."/>
            <person name="Hackett M."/>
            <person name="Haydock A.K."/>
            <person name="Kang A."/>
            <person name="Land M.L."/>
            <person name="Levy R."/>
            <person name="Lie T.J."/>
            <person name="Major T.A."/>
            <person name="Moore B.C."/>
            <person name="Porat I."/>
            <person name="Palmeiri A."/>
            <person name="Rouse G."/>
            <person name="Saenphimmachak C."/>
            <person name="Soell D."/>
            <person name="Van Dien S."/>
            <person name="Wang T."/>
            <person name="Whitman W.B."/>
            <person name="Xia Q."/>
            <person name="Zhang Y."/>
            <person name="Larimer F.W."/>
            <person name="Olson M.V."/>
            <person name="Leigh J.A."/>
        </authorList>
    </citation>
    <scope>NUCLEOTIDE SEQUENCE [LARGE SCALE GENOMIC DNA]</scope>
    <source>
        <strain>DSM 14266 / JCM 13030 / NBRC 101832 / S2 / LL</strain>
    </source>
</reference>
<feature type="chain" id="PRO_0000153797" description="Large ribosomal subunit protein eL31">
    <location>
        <begin position="1"/>
        <end position="83"/>
    </location>
</feature>
<comment type="similarity">
    <text evidence="1">Belongs to the eukaryotic ribosomal protein eL31 family.</text>
</comment>
<accession>Q6M155</accession>
<proteinExistence type="inferred from homology"/>
<keyword id="KW-1185">Reference proteome</keyword>
<keyword id="KW-0687">Ribonucleoprotein</keyword>
<keyword id="KW-0689">Ribosomal protein</keyword>
<sequence length="83" mass="9669">MEEERIYTIPLRDVTNKSPTTKRAPRAIRAIREFLKKHMKSDIVKLDNTINEKVWERSLNKIPAKVRVKVVKEGDVVKATLVE</sequence>
<evidence type="ECO:0000255" key="1">
    <source>
        <dbReference type="HAMAP-Rule" id="MF_00410"/>
    </source>
</evidence>
<evidence type="ECO:0000305" key="2"/>
<protein>
    <recommendedName>
        <fullName evidence="1">Large ribosomal subunit protein eL31</fullName>
    </recommendedName>
    <alternativeName>
        <fullName evidence="2">50S ribosomal protein L31e</fullName>
    </alternativeName>
</protein>
<name>RL31_METMP</name>